<name>PYRR_PEDPA</name>
<evidence type="ECO:0000255" key="1">
    <source>
        <dbReference type="HAMAP-Rule" id="MF_01219"/>
    </source>
</evidence>
<proteinExistence type="inferred from homology"/>
<gene>
    <name evidence="1" type="primary">pyrR</name>
    <name type="ordered locus">PEPE_0942</name>
</gene>
<dbReference type="EC" id="2.4.2.9" evidence="1"/>
<dbReference type="EMBL" id="CP000422">
    <property type="protein sequence ID" value="ABJ67999.1"/>
    <property type="molecule type" value="Genomic_DNA"/>
</dbReference>
<dbReference type="RefSeq" id="WP_002833058.1">
    <property type="nucleotide sequence ID" value="NC_008525.1"/>
</dbReference>
<dbReference type="SMR" id="Q03FM3"/>
<dbReference type="STRING" id="278197.PEPE_0942"/>
<dbReference type="GeneID" id="33062913"/>
<dbReference type="KEGG" id="ppe:PEPE_0942"/>
<dbReference type="eggNOG" id="COG2065">
    <property type="taxonomic scope" value="Bacteria"/>
</dbReference>
<dbReference type="HOGENOM" id="CLU_094234_2_1_9"/>
<dbReference type="OrthoDB" id="9802227at2"/>
<dbReference type="Proteomes" id="UP000000773">
    <property type="component" value="Chromosome"/>
</dbReference>
<dbReference type="GO" id="GO:0003723">
    <property type="term" value="F:RNA binding"/>
    <property type="evidence" value="ECO:0007669"/>
    <property type="project" value="UniProtKB-UniRule"/>
</dbReference>
<dbReference type="GO" id="GO:0004845">
    <property type="term" value="F:uracil phosphoribosyltransferase activity"/>
    <property type="evidence" value="ECO:0007669"/>
    <property type="project" value="UniProtKB-UniRule"/>
</dbReference>
<dbReference type="GO" id="GO:0006353">
    <property type="term" value="P:DNA-templated transcription termination"/>
    <property type="evidence" value="ECO:0007669"/>
    <property type="project" value="UniProtKB-UniRule"/>
</dbReference>
<dbReference type="CDD" id="cd06223">
    <property type="entry name" value="PRTases_typeI"/>
    <property type="match status" value="1"/>
</dbReference>
<dbReference type="FunFam" id="3.40.50.2020:FF:000020">
    <property type="entry name" value="Bifunctional protein PyrR"/>
    <property type="match status" value="1"/>
</dbReference>
<dbReference type="Gene3D" id="3.40.50.2020">
    <property type="match status" value="1"/>
</dbReference>
<dbReference type="HAMAP" id="MF_01219">
    <property type="entry name" value="PyrR"/>
    <property type="match status" value="1"/>
</dbReference>
<dbReference type="InterPro" id="IPR000836">
    <property type="entry name" value="PRibTrfase_dom"/>
</dbReference>
<dbReference type="InterPro" id="IPR029057">
    <property type="entry name" value="PRTase-like"/>
</dbReference>
<dbReference type="InterPro" id="IPR023050">
    <property type="entry name" value="PyrR"/>
</dbReference>
<dbReference type="InterPro" id="IPR050137">
    <property type="entry name" value="PyrR_bifunctional"/>
</dbReference>
<dbReference type="NCBIfam" id="NF003548">
    <property type="entry name" value="PRK05205.1-4"/>
    <property type="match status" value="1"/>
</dbReference>
<dbReference type="NCBIfam" id="NF003549">
    <property type="entry name" value="PRK05205.1-5"/>
    <property type="match status" value="1"/>
</dbReference>
<dbReference type="PANTHER" id="PTHR11608">
    <property type="entry name" value="BIFUNCTIONAL PROTEIN PYRR"/>
    <property type="match status" value="1"/>
</dbReference>
<dbReference type="PANTHER" id="PTHR11608:SF0">
    <property type="entry name" value="BIFUNCTIONAL PROTEIN PYRR"/>
    <property type="match status" value="1"/>
</dbReference>
<dbReference type="Pfam" id="PF00156">
    <property type="entry name" value="Pribosyltran"/>
    <property type="match status" value="1"/>
</dbReference>
<dbReference type="SUPFAM" id="SSF53271">
    <property type="entry name" value="PRTase-like"/>
    <property type="match status" value="1"/>
</dbReference>
<sequence length="177" mass="20174">MEKEIMDAMAMKRALTRITYEIIERNKGVEDIVLIGIKTRGVFIAKRIAERLKQLENFDIPVGELDIAEYRDDQRNSAEPRSTKANSSLAKLDLKDRKVILIDDVLYTGRTIRAAMDAIMDINRPAQISLAVLVDRGHRELPIRADFVGKNIPTAQNEKINVFVREIDDEDVVLLEN</sequence>
<protein>
    <recommendedName>
        <fullName evidence="1">Bifunctional protein PyrR</fullName>
    </recommendedName>
    <domain>
        <recommendedName>
            <fullName evidence="1">Pyrimidine operon regulatory protein</fullName>
        </recommendedName>
    </domain>
    <domain>
        <recommendedName>
            <fullName evidence="1">Uracil phosphoribosyltransferase</fullName>
            <shortName evidence="1">UPRTase</shortName>
            <ecNumber evidence="1">2.4.2.9</ecNumber>
        </recommendedName>
    </domain>
</protein>
<organism>
    <name type="scientific">Pediococcus pentosaceus (strain ATCC 25745 / CCUG 21536 / LMG 10740 / 183-1w)</name>
    <dbReference type="NCBI Taxonomy" id="278197"/>
    <lineage>
        <taxon>Bacteria</taxon>
        <taxon>Bacillati</taxon>
        <taxon>Bacillota</taxon>
        <taxon>Bacilli</taxon>
        <taxon>Lactobacillales</taxon>
        <taxon>Lactobacillaceae</taxon>
        <taxon>Pediococcus</taxon>
    </lineage>
</organism>
<reference key="1">
    <citation type="journal article" date="2006" name="Proc. Natl. Acad. Sci. U.S.A.">
        <title>Comparative genomics of the lactic acid bacteria.</title>
        <authorList>
            <person name="Makarova K.S."/>
            <person name="Slesarev A."/>
            <person name="Wolf Y.I."/>
            <person name="Sorokin A."/>
            <person name="Mirkin B."/>
            <person name="Koonin E.V."/>
            <person name="Pavlov A."/>
            <person name="Pavlova N."/>
            <person name="Karamychev V."/>
            <person name="Polouchine N."/>
            <person name="Shakhova V."/>
            <person name="Grigoriev I."/>
            <person name="Lou Y."/>
            <person name="Rohksar D."/>
            <person name="Lucas S."/>
            <person name="Huang K."/>
            <person name="Goodstein D.M."/>
            <person name="Hawkins T."/>
            <person name="Plengvidhya V."/>
            <person name="Welker D."/>
            <person name="Hughes J."/>
            <person name="Goh Y."/>
            <person name="Benson A."/>
            <person name="Baldwin K."/>
            <person name="Lee J.-H."/>
            <person name="Diaz-Muniz I."/>
            <person name="Dosti B."/>
            <person name="Smeianov V."/>
            <person name="Wechter W."/>
            <person name="Barabote R."/>
            <person name="Lorca G."/>
            <person name="Altermann E."/>
            <person name="Barrangou R."/>
            <person name="Ganesan B."/>
            <person name="Xie Y."/>
            <person name="Rawsthorne H."/>
            <person name="Tamir D."/>
            <person name="Parker C."/>
            <person name="Breidt F."/>
            <person name="Broadbent J.R."/>
            <person name="Hutkins R."/>
            <person name="O'Sullivan D."/>
            <person name="Steele J."/>
            <person name="Unlu G."/>
            <person name="Saier M.H. Jr."/>
            <person name="Klaenhammer T."/>
            <person name="Richardson P."/>
            <person name="Kozyavkin S."/>
            <person name="Weimer B.C."/>
            <person name="Mills D.A."/>
        </authorList>
    </citation>
    <scope>NUCLEOTIDE SEQUENCE [LARGE SCALE GENOMIC DNA]</scope>
    <source>
        <strain>ATCC 25745 / CCUG 21536 / LMG 10740 / 183-1w</strain>
    </source>
</reference>
<comment type="function">
    <text evidence="1">Regulates transcriptional attenuation of the pyrimidine nucleotide (pyr) operon by binding in a uridine-dependent manner to specific sites on pyr mRNA. This disrupts an antiterminator hairpin in the RNA and favors formation of a downstream transcription terminator, leading to a reduced expression of downstream genes.</text>
</comment>
<comment type="function">
    <text evidence="1">Also displays a weak uracil phosphoribosyltransferase activity which is not physiologically significant.</text>
</comment>
<comment type="catalytic activity">
    <reaction evidence="1">
        <text>UMP + diphosphate = 5-phospho-alpha-D-ribose 1-diphosphate + uracil</text>
        <dbReference type="Rhea" id="RHEA:13017"/>
        <dbReference type="ChEBI" id="CHEBI:17568"/>
        <dbReference type="ChEBI" id="CHEBI:33019"/>
        <dbReference type="ChEBI" id="CHEBI:57865"/>
        <dbReference type="ChEBI" id="CHEBI:58017"/>
        <dbReference type="EC" id="2.4.2.9"/>
    </reaction>
</comment>
<comment type="subunit">
    <text evidence="1">Homodimer and homohexamer; in equilibrium.</text>
</comment>
<comment type="similarity">
    <text evidence="1">Belongs to the purine/pyrimidine phosphoribosyltransferase family. PyrR subfamily.</text>
</comment>
<keyword id="KW-0328">Glycosyltransferase</keyword>
<keyword id="KW-0694">RNA-binding</keyword>
<keyword id="KW-0804">Transcription</keyword>
<keyword id="KW-0805">Transcription regulation</keyword>
<keyword id="KW-0806">Transcription termination</keyword>
<keyword id="KW-0808">Transferase</keyword>
<feature type="chain" id="PRO_1000053853" description="Bifunctional protein PyrR">
    <location>
        <begin position="1"/>
        <end position="177"/>
    </location>
</feature>
<feature type="short sequence motif" description="PRPP-binding" evidence="1">
    <location>
        <begin position="99"/>
        <end position="111"/>
    </location>
</feature>
<accession>Q03FM3</accession>